<gene>
    <name evidence="1" type="primary">rpl18a</name>
    <name evidence="1" type="synonym">rpl20e</name>
    <name evidence="1" type="synonym">rplX</name>
    <name type="ordered locus">Tneu_1661</name>
</gene>
<sequence>MPRIYRVVGETATGMRFRVEVTAEKPYDAVEKVYSLIGSRHKLSRVQIKIREVAVVSPEEARSDAAKLLMAVDRVVRY</sequence>
<keyword id="KW-0687">Ribonucleoprotein</keyword>
<keyword id="KW-0689">Ribosomal protein</keyword>
<keyword id="KW-0694">RNA-binding</keyword>
<keyword id="KW-0699">rRNA-binding</keyword>
<reference key="1">
    <citation type="submission" date="2008-03" db="EMBL/GenBank/DDBJ databases">
        <title>Complete sequence of Thermoproteus neutrophilus V24Sta.</title>
        <authorList>
            <consortium name="US DOE Joint Genome Institute"/>
            <person name="Copeland A."/>
            <person name="Lucas S."/>
            <person name="Lapidus A."/>
            <person name="Glavina del Rio T."/>
            <person name="Dalin E."/>
            <person name="Tice H."/>
            <person name="Bruce D."/>
            <person name="Goodwin L."/>
            <person name="Pitluck S."/>
            <person name="Sims D."/>
            <person name="Brettin T."/>
            <person name="Detter J.C."/>
            <person name="Han C."/>
            <person name="Kuske C.R."/>
            <person name="Schmutz J."/>
            <person name="Larimer F."/>
            <person name="Land M."/>
            <person name="Hauser L."/>
            <person name="Kyrpides N."/>
            <person name="Mikhailova N."/>
            <person name="Biddle J.F."/>
            <person name="Zhang Z."/>
            <person name="Fitz-Gibbon S.T."/>
            <person name="Lowe T.M."/>
            <person name="Saltikov C."/>
            <person name="House C.H."/>
            <person name="Richardson P."/>
        </authorList>
    </citation>
    <scope>NUCLEOTIDE SEQUENCE [LARGE SCALE GENOMIC DNA]</scope>
    <source>
        <strain>DSM 2338 / JCM 9278 / NBRC 100436 / V24Sta</strain>
    </source>
</reference>
<feature type="chain" id="PRO_1000114569" description="Large ribosomal subunit protein eL20">
    <location>
        <begin position="1"/>
        <end position="78"/>
    </location>
</feature>
<comment type="subunit">
    <text evidence="1">Part of the 50S ribosomal subunit. Binds 23S rRNA.</text>
</comment>
<comment type="similarity">
    <text evidence="1">Belongs to the eukaryotic ribosomal protein eL20 family.</text>
</comment>
<proteinExistence type="inferred from homology"/>
<protein>
    <recommendedName>
        <fullName evidence="1">Large ribosomal subunit protein eL20</fullName>
    </recommendedName>
    <alternativeName>
        <fullName evidence="2">50S ribosomal protein L18Ae</fullName>
    </alternativeName>
    <alternativeName>
        <fullName evidence="1">50S ribosomal protein L20e</fullName>
    </alternativeName>
    <alternativeName>
        <fullName evidence="1">50S ribosomal protein LX</fullName>
    </alternativeName>
</protein>
<dbReference type="EMBL" id="CP001014">
    <property type="protein sequence ID" value="ACB40583.1"/>
    <property type="molecule type" value="Genomic_DNA"/>
</dbReference>
<dbReference type="RefSeq" id="WP_012351002.1">
    <property type="nucleotide sequence ID" value="NC_010525.1"/>
</dbReference>
<dbReference type="SMR" id="B1YAD4"/>
<dbReference type="STRING" id="444157.Tneu_1661"/>
<dbReference type="GeneID" id="6166324"/>
<dbReference type="KEGG" id="tne:Tneu_1661"/>
<dbReference type="eggNOG" id="arCOG04175">
    <property type="taxonomic scope" value="Archaea"/>
</dbReference>
<dbReference type="HOGENOM" id="CLU_177460_0_1_2"/>
<dbReference type="OrthoDB" id="191241at2157"/>
<dbReference type="Proteomes" id="UP000001694">
    <property type="component" value="Chromosome"/>
</dbReference>
<dbReference type="GO" id="GO:1990904">
    <property type="term" value="C:ribonucleoprotein complex"/>
    <property type="evidence" value="ECO:0007669"/>
    <property type="project" value="UniProtKB-KW"/>
</dbReference>
<dbReference type="GO" id="GO:0005840">
    <property type="term" value="C:ribosome"/>
    <property type="evidence" value="ECO:0007669"/>
    <property type="project" value="UniProtKB-KW"/>
</dbReference>
<dbReference type="GO" id="GO:0070180">
    <property type="term" value="F:large ribosomal subunit rRNA binding"/>
    <property type="evidence" value="ECO:0007669"/>
    <property type="project" value="UniProtKB-UniRule"/>
</dbReference>
<dbReference type="GO" id="GO:0003735">
    <property type="term" value="F:structural constituent of ribosome"/>
    <property type="evidence" value="ECO:0007669"/>
    <property type="project" value="InterPro"/>
</dbReference>
<dbReference type="GO" id="GO:0006412">
    <property type="term" value="P:translation"/>
    <property type="evidence" value="ECO:0007669"/>
    <property type="project" value="UniProtKB-UniRule"/>
</dbReference>
<dbReference type="Gene3D" id="3.10.20.10">
    <property type="match status" value="1"/>
</dbReference>
<dbReference type="HAMAP" id="MF_00273">
    <property type="entry name" value="Ribosomal_eL20"/>
    <property type="match status" value="1"/>
</dbReference>
<dbReference type="InterPro" id="IPR028877">
    <property type="entry name" value="Ribosomal_eL20"/>
</dbReference>
<dbReference type="InterPro" id="IPR023573">
    <property type="entry name" value="Ribosomal_eL20_dom"/>
</dbReference>
<dbReference type="NCBIfam" id="NF001981">
    <property type="entry name" value="PRK00773.1-1"/>
    <property type="match status" value="1"/>
</dbReference>
<dbReference type="Pfam" id="PF01775">
    <property type="entry name" value="Ribosomal_L18A"/>
    <property type="match status" value="1"/>
</dbReference>
<dbReference type="SUPFAM" id="SSF160374">
    <property type="entry name" value="RplX-like"/>
    <property type="match status" value="1"/>
</dbReference>
<accession>B1YAD4</accession>
<evidence type="ECO:0000255" key="1">
    <source>
        <dbReference type="HAMAP-Rule" id="MF_00273"/>
    </source>
</evidence>
<evidence type="ECO:0000305" key="2"/>
<organism>
    <name type="scientific">Pyrobaculum neutrophilum (strain DSM 2338 / JCM 9278 / NBRC 100436 / V24Sta)</name>
    <name type="common">Thermoproteus neutrophilus</name>
    <dbReference type="NCBI Taxonomy" id="444157"/>
    <lineage>
        <taxon>Archaea</taxon>
        <taxon>Thermoproteota</taxon>
        <taxon>Thermoprotei</taxon>
        <taxon>Thermoproteales</taxon>
        <taxon>Thermoproteaceae</taxon>
        <taxon>Pyrobaculum</taxon>
    </lineage>
</organism>
<name>RL18A_PYRNV</name>